<comment type="function">
    <text evidence="1">Catalyzes the phosphorylation of D-fructose 6-phosphate to fructose 1,6-bisphosphate by ATP, the first committing step of glycolysis.</text>
</comment>
<comment type="catalytic activity">
    <reaction evidence="1">
        <text>beta-D-fructose 6-phosphate + ATP = beta-D-fructose 1,6-bisphosphate + ADP + H(+)</text>
        <dbReference type="Rhea" id="RHEA:16109"/>
        <dbReference type="ChEBI" id="CHEBI:15378"/>
        <dbReference type="ChEBI" id="CHEBI:30616"/>
        <dbReference type="ChEBI" id="CHEBI:32966"/>
        <dbReference type="ChEBI" id="CHEBI:57634"/>
        <dbReference type="ChEBI" id="CHEBI:456216"/>
        <dbReference type="EC" id="2.7.1.11"/>
    </reaction>
</comment>
<comment type="cofactor">
    <cofactor evidence="1">
        <name>Mg(2+)</name>
        <dbReference type="ChEBI" id="CHEBI:18420"/>
    </cofactor>
</comment>
<comment type="activity regulation">
    <text evidence="1">Allosterically activated by ADP and other diphosphonucleosides, and allosterically inhibited by phosphoenolpyruvate.</text>
</comment>
<comment type="pathway">
    <text evidence="1">Carbohydrate degradation; glycolysis; D-glyceraldehyde 3-phosphate and glycerone phosphate from D-glucose: step 3/4.</text>
</comment>
<comment type="subunit">
    <text evidence="1">Homotetramer.</text>
</comment>
<comment type="subcellular location">
    <subcellularLocation>
        <location evidence="1">Cytoplasm</location>
    </subcellularLocation>
</comment>
<comment type="similarity">
    <text evidence="1">Belongs to the phosphofructokinase type A (PFKA) family. ATP-dependent PFK group I subfamily. Prokaryotic clade 'B1' sub-subfamily.</text>
</comment>
<dbReference type="EC" id="2.7.1.11" evidence="1"/>
<dbReference type="EMBL" id="CP001063">
    <property type="protein sequence ID" value="ACD07628.1"/>
    <property type="molecule type" value="Genomic_DNA"/>
</dbReference>
<dbReference type="RefSeq" id="WP_000591795.1">
    <property type="nucleotide sequence ID" value="NC_010658.1"/>
</dbReference>
<dbReference type="SMR" id="B2TVQ8"/>
<dbReference type="STRING" id="344609.SbBS512_E4395"/>
<dbReference type="GeneID" id="93777982"/>
<dbReference type="KEGG" id="sbc:SbBS512_E4395"/>
<dbReference type="HOGENOM" id="CLU_020655_0_1_6"/>
<dbReference type="UniPathway" id="UPA00109">
    <property type="reaction ID" value="UER00182"/>
</dbReference>
<dbReference type="Proteomes" id="UP000001030">
    <property type="component" value="Chromosome"/>
</dbReference>
<dbReference type="GO" id="GO:0005945">
    <property type="term" value="C:6-phosphofructokinase complex"/>
    <property type="evidence" value="ECO:0007669"/>
    <property type="project" value="TreeGrafter"/>
</dbReference>
<dbReference type="GO" id="GO:0003872">
    <property type="term" value="F:6-phosphofructokinase activity"/>
    <property type="evidence" value="ECO:0007669"/>
    <property type="project" value="UniProtKB-UniRule"/>
</dbReference>
<dbReference type="GO" id="GO:0016208">
    <property type="term" value="F:AMP binding"/>
    <property type="evidence" value="ECO:0007669"/>
    <property type="project" value="TreeGrafter"/>
</dbReference>
<dbReference type="GO" id="GO:0005524">
    <property type="term" value="F:ATP binding"/>
    <property type="evidence" value="ECO:0007669"/>
    <property type="project" value="UniProtKB-KW"/>
</dbReference>
<dbReference type="GO" id="GO:0070095">
    <property type="term" value="F:fructose-6-phosphate binding"/>
    <property type="evidence" value="ECO:0007669"/>
    <property type="project" value="TreeGrafter"/>
</dbReference>
<dbReference type="GO" id="GO:0042802">
    <property type="term" value="F:identical protein binding"/>
    <property type="evidence" value="ECO:0007669"/>
    <property type="project" value="TreeGrafter"/>
</dbReference>
<dbReference type="GO" id="GO:0046872">
    <property type="term" value="F:metal ion binding"/>
    <property type="evidence" value="ECO:0007669"/>
    <property type="project" value="UniProtKB-KW"/>
</dbReference>
<dbReference type="GO" id="GO:0048029">
    <property type="term" value="F:monosaccharide binding"/>
    <property type="evidence" value="ECO:0007669"/>
    <property type="project" value="TreeGrafter"/>
</dbReference>
<dbReference type="GO" id="GO:0061621">
    <property type="term" value="P:canonical glycolysis"/>
    <property type="evidence" value="ECO:0007669"/>
    <property type="project" value="TreeGrafter"/>
</dbReference>
<dbReference type="GO" id="GO:0030388">
    <property type="term" value="P:fructose 1,6-bisphosphate metabolic process"/>
    <property type="evidence" value="ECO:0007669"/>
    <property type="project" value="TreeGrafter"/>
</dbReference>
<dbReference type="GO" id="GO:0006002">
    <property type="term" value="P:fructose 6-phosphate metabolic process"/>
    <property type="evidence" value="ECO:0007669"/>
    <property type="project" value="InterPro"/>
</dbReference>
<dbReference type="CDD" id="cd00763">
    <property type="entry name" value="Bacterial_PFK"/>
    <property type="match status" value="1"/>
</dbReference>
<dbReference type="FunFam" id="3.40.50.450:FF:000001">
    <property type="entry name" value="ATP-dependent 6-phosphofructokinase"/>
    <property type="match status" value="1"/>
</dbReference>
<dbReference type="FunFam" id="3.40.50.460:FF:000002">
    <property type="entry name" value="ATP-dependent 6-phosphofructokinase"/>
    <property type="match status" value="1"/>
</dbReference>
<dbReference type="Gene3D" id="3.40.50.450">
    <property type="match status" value="1"/>
</dbReference>
<dbReference type="Gene3D" id="3.40.50.460">
    <property type="entry name" value="Phosphofructokinase domain"/>
    <property type="match status" value="1"/>
</dbReference>
<dbReference type="HAMAP" id="MF_00339">
    <property type="entry name" value="Phosphofructokinase_I_B1"/>
    <property type="match status" value="1"/>
</dbReference>
<dbReference type="InterPro" id="IPR022953">
    <property type="entry name" value="ATP_PFK"/>
</dbReference>
<dbReference type="InterPro" id="IPR012003">
    <property type="entry name" value="ATP_PFK_prok-type"/>
</dbReference>
<dbReference type="InterPro" id="IPR012828">
    <property type="entry name" value="PFKA_ATP_prok"/>
</dbReference>
<dbReference type="InterPro" id="IPR015912">
    <property type="entry name" value="Phosphofructokinase_CS"/>
</dbReference>
<dbReference type="InterPro" id="IPR000023">
    <property type="entry name" value="Phosphofructokinase_dom"/>
</dbReference>
<dbReference type="InterPro" id="IPR035966">
    <property type="entry name" value="PKF_sf"/>
</dbReference>
<dbReference type="NCBIfam" id="TIGR02482">
    <property type="entry name" value="PFKA_ATP"/>
    <property type="match status" value="1"/>
</dbReference>
<dbReference type="NCBIfam" id="NF002872">
    <property type="entry name" value="PRK03202.1"/>
    <property type="match status" value="1"/>
</dbReference>
<dbReference type="PANTHER" id="PTHR13697:SF4">
    <property type="entry name" value="ATP-DEPENDENT 6-PHOSPHOFRUCTOKINASE"/>
    <property type="match status" value="1"/>
</dbReference>
<dbReference type="PANTHER" id="PTHR13697">
    <property type="entry name" value="PHOSPHOFRUCTOKINASE"/>
    <property type="match status" value="1"/>
</dbReference>
<dbReference type="Pfam" id="PF00365">
    <property type="entry name" value="PFK"/>
    <property type="match status" value="1"/>
</dbReference>
<dbReference type="PIRSF" id="PIRSF000532">
    <property type="entry name" value="ATP_PFK_prok"/>
    <property type="match status" value="1"/>
</dbReference>
<dbReference type="PRINTS" id="PR00476">
    <property type="entry name" value="PHFRCTKINASE"/>
</dbReference>
<dbReference type="SUPFAM" id="SSF53784">
    <property type="entry name" value="Phosphofructokinase"/>
    <property type="match status" value="1"/>
</dbReference>
<dbReference type="PROSITE" id="PS00433">
    <property type="entry name" value="PHOSPHOFRUCTOKINASE"/>
    <property type="match status" value="1"/>
</dbReference>
<reference key="1">
    <citation type="submission" date="2008-05" db="EMBL/GenBank/DDBJ databases">
        <title>Complete sequence of Shigella boydii serotype 18 strain BS512.</title>
        <authorList>
            <person name="Rasko D.A."/>
            <person name="Rosovitz M."/>
            <person name="Maurelli A.T."/>
            <person name="Myers G."/>
            <person name="Seshadri R."/>
            <person name="Cer R."/>
            <person name="Jiang L."/>
            <person name="Ravel J."/>
            <person name="Sebastian Y."/>
        </authorList>
    </citation>
    <scope>NUCLEOTIDE SEQUENCE [LARGE SCALE GENOMIC DNA]</scope>
    <source>
        <strain>CDC 3083-94 / BS512</strain>
    </source>
</reference>
<gene>
    <name evidence="1" type="primary">pfkA</name>
    <name type="ordered locus">SbBS512_E4395</name>
</gene>
<name>PFKA_SHIB3</name>
<keyword id="KW-0021">Allosteric enzyme</keyword>
<keyword id="KW-0067">ATP-binding</keyword>
<keyword id="KW-0963">Cytoplasm</keyword>
<keyword id="KW-0324">Glycolysis</keyword>
<keyword id="KW-0418">Kinase</keyword>
<keyword id="KW-0460">Magnesium</keyword>
<keyword id="KW-0479">Metal-binding</keyword>
<keyword id="KW-0547">Nucleotide-binding</keyword>
<keyword id="KW-1185">Reference proteome</keyword>
<keyword id="KW-0808">Transferase</keyword>
<sequence>MIKKIGVLTSGGDAPGMNAAIRGVVRSALTEGLEVMGIYDGYLGLYEDRMVQLDRYSVSDMINRGGTFLGSARFPEFRDENIRAVAIENLKKRGIDALVVIGGDGSYMGAMRLTEMGFPCIGLPGTIDNDIKGTDYTIGFFTALSTVVEAIDRLRDTSSSHQRISVVEVMGRYCGDLTLAAAIAGGCEFVVVPEVEFSREDLVNEIKAGIAKGKKHAIVAITEHMCDVDELAHFIEKETGRETRATVLGHIQRGGSPVPYDRILASRMGAYAIDLLLAGYGGRCVGIQNEQLVHHDIIDAIENMKRPFKGDWLDCAKKLY</sequence>
<proteinExistence type="inferred from homology"/>
<protein>
    <recommendedName>
        <fullName evidence="1">ATP-dependent 6-phosphofructokinase isozyme 1</fullName>
        <shortName evidence="1">ATP-PFK 1</shortName>
        <shortName evidence="1">Phosphofructokinase 1</shortName>
        <ecNumber evidence="1">2.7.1.11</ecNumber>
    </recommendedName>
    <alternativeName>
        <fullName>6-phosphofructokinase isozyme I</fullName>
    </alternativeName>
    <alternativeName>
        <fullName evidence="1">Phosphohexokinase 1</fullName>
    </alternativeName>
</protein>
<feature type="chain" id="PRO_1000120058" description="ATP-dependent 6-phosphofructokinase isozyme 1">
    <location>
        <begin position="1"/>
        <end position="320"/>
    </location>
</feature>
<feature type="active site" description="Proton acceptor" evidence="1">
    <location>
        <position position="128"/>
    </location>
</feature>
<feature type="binding site" evidence="1">
    <location>
        <position position="12"/>
    </location>
    <ligand>
        <name>ATP</name>
        <dbReference type="ChEBI" id="CHEBI:30616"/>
    </ligand>
</feature>
<feature type="binding site" evidence="1">
    <location>
        <begin position="22"/>
        <end position="26"/>
    </location>
    <ligand>
        <name>ADP</name>
        <dbReference type="ChEBI" id="CHEBI:456216"/>
        <note>allosteric activator; ligand shared between dimeric partners</note>
    </ligand>
</feature>
<feature type="binding site" evidence="1">
    <location>
        <begin position="55"/>
        <end position="60"/>
    </location>
    <ligand>
        <name>ADP</name>
        <dbReference type="ChEBI" id="CHEBI:456216"/>
        <note>allosteric activator; ligand shared between dimeric partners</note>
    </ligand>
</feature>
<feature type="binding site" evidence="1">
    <location>
        <begin position="73"/>
        <end position="74"/>
    </location>
    <ligand>
        <name>ATP</name>
        <dbReference type="ChEBI" id="CHEBI:30616"/>
    </ligand>
</feature>
<feature type="binding site" evidence="1">
    <location>
        <begin position="103"/>
        <end position="106"/>
    </location>
    <ligand>
        <name>ATP</name>
        <dbReference type="ChEBI" id="CHEBI:30616"/>
    </ligand>
</feature>
<feature type="binding site" evidence="1">
    <location>
        <position position="104"/>
    </location>
    <ligand>
        <name>Mg(2+)</name>
        <dbReference type="ChEBI" id="CHEBI:18420"/>
        <note>catalytic</note>
    </ligand>
</feature>
<feature type="binding site" description="in other chain" evidence="1">
    <location>
        <begin position="126"/>
        <end position="128"/>
    </location>
    <ligand>
        <name>substrate</name>
        <note>ligand shared between dimeric partners</note>
    </ligand>
</feature>
<feature type="binding site" description="in other chain" evidence="1">
    <location>
        <position position="155"/>
    </location>
    <ligand>
        <name>ADP</name>
        <dbReference type="ChEBI" id="CHEBI:456216"/>
        <note>allosteric activator; ligand shared between dimeric partners</note>
    </ligand>
</feature>
<feature type="binding site" evidence="1">
    <location>
        <position position="163"/>
    </location>
    <ligand>
        <name>substrate</name>
        <note>ligand shared between dimeric partners</note>
    </ligand>
</feature>
<feature type="binding site" description="in other chain" evidence="1">
    <location>
        <begin position="170"/>
        <end position="172"/>
    </location>
    <ligand>
        <name>substrate</name>
        <note>ligand shared between dimeric partners</note>
    </ligand>
</feature>
<feature type="binding site" description="in other chain" evidence="1">
    <location>
        <begin position="186"/>
        <end position="188"/>
    </location>
    <ligand>
        <name>ADP</name>
        <dbReference type="ChEBI" id="CHEBI:456216"/>
        <note>allosteric activator; ligand shared between dimeric partners</note>
    </ligand>
</feature>
<feature type="binding site" description="in other chain" evidence="1">
    <location>
        <position position="212"/>
    </location>
    <ligand>
        <name>ADP</name>
        <dbReference type="ChEBI" id="CHEBI:456216"/>
        <note>allosteric activator; ligand shared between dimeric partners</note>
    </ligand>
</feature>
<feature type="binding site" description="in other chain" evidence="1">
    <location>
        <begin position="214"/>
        <end position="216"/>
    </location>
    <ligand>
        <name>ADP</name>
        <dbReference type="ChEBI" id="CHEBI:456216"/>
        <note>allosteric activator; ligand shared between dimeric partners</note>
    </ligand>
</feature>
<feature type="binding site" description="in other chain" evidence="1">
    <location>
        <position position="223"/>
    </location>
    <ligand>
        <name>substrate</name>
        <note>ligand shared between dimeric partners</note>
    </ligand>
</feature>
<feature type="binding site" evidence="1">
    <location>
        <position position="244"/>
    </location>
    <ligand>
        <name>substrate</name>
        <note>ligand shared between dimeric partners</note>
    </ligand>
</feature>
<feature type="binding site" description="in other chain" evidence="1">
    <location>
        <begin position="250"/>
        <end position="253"/>
    </location>
    <ligand>
        <name>substrate</name>
        <note>ligand shared between dimeric partners</note>
    </ligand>
</feature>
<accession>B2TVQ8</accession>
<evidence type="ECO:0000255" key="1">
    <source>
        <dbReference type="HAMAP-Rule" id="MF_00339"/>
    </source>
</evidence>
<organism>
    <name type="scientific">Shigella boydii serotype 18 (strain CDC 3083-94 / BS512)</name>
    <dbReference type="NCBI Taxonomy" id="344609"/>
    <lineage>
        <taxon>Bacteria</taxon>
        <taxon>Pseudomonadati</taxon>
        <taxon>Pseudomonadota</taxon>
        <taxon>Gammaproteobacteria</taxon>
        <taxon>Enterobacterales</taxon>
        <taxon>Enterobacteriaceae</taxon>
        <taxon>Shigella</taxon>
    </lineage>
</organism>